<name>TRPC_BACAH</name>
<reference key="1">
    <citation type="journal article" date="2007" name="J. Bacteriol.">
        <title>The complete genome sequence of Bacillus thuringiensis Al Hakam.</title>
        <authorList>
            <person name="Challacombe J.F."/>
            <person name="Altherr M.R."/>
            <person name="Xie G."/>
            <person name="Bhotika S.S."/>
            <person name="Brown N."/>
            <person name="Bruce D."/>
            <person name="Campbell C.S."/>
            <person name="Campbell M.L."/>
            <person name="Chen J."/>
            <person name="Chertkov O."/>
            <person name="Cleland C."/>
            <person name="Dimitrijevic M."/>
            <person name="Doggett N.A."/>
            <person name="Fawcett J.J."/>
            <person name="Glavina T."/>
            <person name="Goodwin L.A."/>
            <person name="Green L.D."/>
            <person name="Han C.S."/>
            <person name="Hill K.K."/>
            <person name="Hitchcock P."/>
            <person name="Jackson P.J."/>
            <person name="Keim P."/>
            <person name="Kewalramani A.R."/>
            <person name="Longmire J."/>
            <person name="Lucas S."/>
            <person name="Malfatti S."/>
            <person name="Martinez D."/>
            <person name="McMurry K."/>
            <person name="Meincke L.J."/>
            <person name="Misra M."/>
            <person name="Moseman B.L."/>
            <person name="Mundt M."/>
            <person name="Munk A.C."/>
            <person name="Okinaka R.T."/>
            <person name="Parson-Quintana B."/>
            <person name="Reilly L.P."/>
            <person name="Richardson P."/>
            <person name="Robinson D.L."/>
            <person name="Saunders E."/>
            <person name="Tapia R."/>
            <person name="Tesmer J.G."/>
            <person name="Thayer N."/>
            <person name="Thompson L.S."/>
            <person name="Tice H."/>
            <person name="Ticknor L.O."/>
            <person name="Wills P.L."/>
            <person name="Gilna P."/>
            <person name="Brettin T.S."/>
        </authorList>
    </citation>
    <scope>NUCLEOTIDE SEQUENCE [LARGE SCALE GENOMIC DNA]</scope>
    <source>
        <strain>Al Hakam</strain>
    </source>
</reference>
<organism>
    <name type="scientific">Bacillus thuringiensis (strain Al Hakam)</name>
    <dbReference type="NCBI Taxonomy" id="412694"/>
    <lineage>
        <taxon>Bacteria</taxon>
        <taxon>Bacillati</taxon>
        <taxon>Bacillota</taxon>
        <taxon>Bacilli</taxon>
        <taxon>Bacillales</taxon>
        <taxon>Bacillaceae</taxon>
        <taxon>Bacillus</taxon>
        <taxon>Bacillus cereus group</taxon>
    </lineage>
</organism>
<sequence>MGTILDKIVDQKKKEVAALYETYTPVKEKRKTRSLVKALEQFTVIAEVKRASPSKGDINLHVDVRKQVKTYEGCGAGAVSVLTDGQFFKGSFYDLQTAREESSIPLLCKDFIIDKIQIDRAYEAGADIILLIVAALTKEKLKELYSYVLEKGLEAIVEVHDEKELEIAIQLNPHVIGINNRNLKTFEVDLSQTEKLGKRLNEEKLLWISESGIHSKEDIICVKRAGAKGVLVGEALMTSSSIHTFFEDCKVNI</sequence>
<feature type="chain" id="PRO_1000018436" description="Indole-3-glycerol phosphate synthase">
    <location>
        <begin position="1"/>
        <end position="253"/>
    </location>
</feature>
<protein>
    <recommendedName>
        <fullName evidence="1">Indole-3-glycerol phosphate synthase</fullName>
        <shortName evidence="1">IGPS</shortName>
        <ecNumber evidence="1">4.1.1.48</ecNumber>
    </recommendedName>
</protein>
<keyword id="KW-0028">Amino-acid biosynthesis</keyword>
<keyword id="KW-0057">Aromatic amino acid biosynthesis</keyword>
<keyword id="KW-0210">Decarboxylase</keyword>
<keyword id="KW-0456">Lyase</keyword>
<keyword id="KW-0822">Tryptophan biosynthesis</keyword>
<accession>A0RB62</accession>
<dbReference type="EC" id="4.1.1.48" evidence="1"/>
<dbReference type="EMBL" id="CP000485">
    <property type="protein sequence ID" value="ABK84455.1"/>
    <property type="molecule type" value="Genomic_DNA"/>
</dbReference>
<dbReference type="RefSeq" id="WP_000536694.1">
    <property type="nucleotide sequence ID" value="NC_008600.1"/>
</dbReference>
<dbReference type="SMR" id="A0RB62"/>
<dbReference type="KEGG" id="btl:BALH_1098"/>
<dbReference type="HOGENOM" id="CLU_034247_2_0_9"/>
<dbReference type="UniPathway" id="UPA00035">
    <property type="reaction ID" value="UER00043"/>
</dbReference>
<dbReference type="GO" id="GO:0004425">
    <property type="term" value="F:indole-3-glycerol-phosphate synthase activity"/>
    <property type="evidence" value="ECO:0007669"/>
    <property type="project" value="UniProtKB-UniRule"/>
</dbReference>
<dbReference type="GO" id="GO:0004640">
    <property type="term" value="F:phosphoribosylanthranilate isomerase activity"/>
    <property type="evidence" value="ECO:0007669"/>
    <property type="project" value="TreeGrafter"/>
</dbReference>
<dbReference type="GO" id="GO:0000162">
    <property type="term" value="P:L-tryptophan biosynthetic process"/>
    <property type="evidence" value="ECO:0007669"/>
    <property type="project" value="UniProtKB-UniRule"/>
</dbReference>
<dbReference type="CDD" id="cd00331">
    <property type="entry name" value="IGPS"/>
    <property type="match status" value="1"/>
</dbReference>
<dbReference type="FunFam" id="3.20.20.70:FF:000024">
    <property type="entry name" value="Indole-3-glycerol phosphate synthase"/>
    <property type="match status" value="1"/>
</dbReference>
<dbReference type="Gene3D" id="3.20.20.70">
    <property type="entry name" value="Aldolase class I"/>
    <property type="match status" value="1"/>
</dbReference>
<dbReference type="HAMAP" id="MF_00134_B">
    <property type="entry name" value="IGPS_B"/>
    <property type="match status" value="1"/>
</dbReference>
<dbReference type="InterPro" id="IPR013785">
    <property type="entry name" value="Aldolase_TIM"/>
</dbReference>
<dbReference type="InterPro" id="IPR045186">
    <property type="entry name" value="Indole-3-glycerol_P_synth"/>
</dbReference>
<dbReference type="InterPro" id="IPR013798">
    <property type="entry name" value="Indole-3-glycerol_P_synth_dom"/>
</dbReference>
<dbReference type="InterPro" id="IPR001468">
    <property type="entry name" value="Indole-3-GlycerolPSynthase_CS"/>
</dbReference>
<dbReference type="InterPro" id="IPR011060">
    <property type="entry name" value="RibuloseP-bd_barrel"/>
</dbReference>
<dbReference type="NCBIfam" id="NF001371">
    <property type="entry name" value="PRK00278.1-3"/>
    <property type="match status" value="1"/>
</dbReference>
<dbReference type="NCBIfam" id="NF001377">
    <property type="entry name" value="PRK00278.2-4"/>
    <property type="match status" value="1"/>
</dbReference>
<dbReference type="PANTHER" id="PTHR22854:SF2">
    <property type="entry name" value="INDOLE-3-GLYCEROL-PHOSPHATE SYNTHASE"/>
    <property type="match status" value="1"/>
</dbReference>
<dbReference type="PANTHER" id="PTHR22854">
    <property type="entry name" value="TRYPTOPHAN BIOSYNTHESIS PROTEIN"/>
    <property type="match status" value="1"/>
</dbReference>
<dbReference type="Pfam" id="PF00218">
    <property type="entry name" value="IGPS"/>
    <property type="match status" value="1"/>
</dbReference>
<dbReference type="SUPFAM" id="SSF51366">
    <property type="entry name" value="Ribulose-phoshate binding barrel"/>
    <property type="match status" value="1"/>
</dbReference>
<dbReference type="PROSITE" id="PS00614">
    <property type="entry name" value="IGPS"/>
    <property type="match status" value="1"/>
</dbReference>
<proteinExistence type="inferred from homology"/>
<evidence type="ECO:0000255" key="1">
    <source>
        <dbReference type="HAMAP-Rule" id="MF_00134"/>
    </source>
</evidence>
<gene>
    <name evidence="1" type="primary">trpC</name>
    <name type="ordered locus">BALH_1098</name>
</gene>
<comment type="catalytic activity">
    <reaction evidence="1">
        <text>1-(2-carboxyphenylamino)-1-deoxy-D-ribulose 5-phosphate + H(+) = (1S,2R)-1-C-(indol-3-yl)glycerol 3-phosphate + CO2 + H2O</text>
        <dbReference type="Rhea" id="RHEA:23476"/>
        <dbReference type="ChEBI" id="CHEBI:15377"/>
        <dbReference type="ChEBI" id="CHEBI:15378"/>
        <dbReference type="ChEBI" id="CHEBI:16526"/>
        <dbReference type="ChEBI" id="CHEBI:58613"/>
        <dbReference type="ChEBI" id="CHEBI:58866"/>
        <dbReference type="EC" id="4.1.1.48"/>
    </reaction>
</comment>
<comment type="pathway">
    <text evidence="1">Amino-acid biosynthesis; L-tryptophan biosynthesis; L-tryptophan from chorismate: step 4/5.</text>
</comment>
<comment type="similarity">
    <text evidence="1">Belongs to the TrpC family.</text>
</comment>